<comment type="function">
    <text evidence="2 4 5 6">J region of the variable domain of T cell receptor (TR) alpha chain that participates in the antigen recognition (PubMed:24600447). Alpha-beta T cell receptors are antigen specific receptors which are essential to the immune response and are present on the cell surface of T lymphocytes. Recognize peptide-major histocompatibility (MH) (pMH) complexes that are displayed by antigen presenting cells (APC), a prerequisite for efficient T cell adaptive immunity against pathogens (PubMed:25493333). Binding of alpha-beta TR to pMH complex initiates TR-CD3 clustering on the cell surface and intracellular activation of LCK that phosphorylates the ITAM motifs of CD3G, CD3D, CD3E and CD247 enabling the recruitment of ZAP70. In turn, ZAP70 phosphorylates LAT, which recruits numerous signaling molecules to form the LAT signalosome. The LAT signalosome propagates signal branching to three major signaling pathways, the calcium, the mitogen-activated protein kinase (MAPK) kinase and the nuclear factor NF-kappa-B (NF-kB) pathways, leading to the mobilization of transcription factors that are critical for gene expression and essential for T cell growth and differentiation (PubMed:23524462). The T cell repertoire is generated in the thymus, by V-(D)-J rearrangement. This repertoire is then shaped by intrathymic selection events to generate a peripheral T cell pool of self-MH restricted, non-autoaggressive T cells. Post-thymic interaction of alpha-beta TR with the pMH complexes shapes TR structural and functional avidity (PubMed:15040585).</text>
</comment>
<comment type="subunit">
    <text evidence="3">Alpha-beta TR is a heterodimer composed of an alpha and beta chain; disulfide-linked. The alpha-beta TR is associated with the transmembrane signaling CD3 coreceptor proteins to form the TR-CD3 (TcR or TCR). The assembly of alpha-beta TR heterodimers with CD3 occurs in the endoplasmic reticulum where a single alpha-beta TR heterodimer associates with one CD3D-CD3E heterodimer, one CD3G-CD3E heterodimer and one CD247 homodimer forming a stable octameric structure. CD3D-CD3E and CD3G-CD3E heterodimers preferentially associate with TR alpha and TR beta chains, respectively. The association of the CD247 homodimer is the last step of TcR assembly in the endoplasmic reticulum and is required for transport to the cell surface.</text>
</comment>
<comment type="subcellular location">
    <subcellularLocation>
        <location evidence="3">Cell membrane</location>
    </subcellularLocation>
</comment>
<accession>A0A075B6Y9</accession>
<gene>
    <name evidence="7 8" type="primary">TRAJ42</name>
</gene>
<reference key="1">
    <citation type="journal article" date="2003" name="Nature">
        <title>The DNA sequence and analysis of human chromosome 14.</title>
        <authorList>
            <person name="Heilig R."/>
            <person name="Eckenberg R."/>
            <person name="Petit J.-L."/>
            <person name="Fonknechten N."/>
            <person name="Da Silva C."/>
            <person name="Cattolico L."/>
            <person name="Levy M."/>
            <person name="Barbe V."/>
            <person name="De Berardinis V."/>
            <person name="Ureta-Vidal A."/>
            <person name="Pelletier E."/>
            <person name="Vico V."/>
            <person name="Anthouard V."/>
            <person name="Rowen L."/>
            <person name="Madan A."/>
            <person name="Qin S."/>
            <person name="Sun H."/>
            <person name="Du H."/>
            <person name="Pepin K."/>
            <person name="Artiguenave F."/>
            <person name="Robert C."/>
            <person name="Cruaud C."/>
            <person name="Bruels T."/>
            <person name="Jaillon O."/>
            <person name="Friedlander L."/>
            <person name="Samson G."/>
            <person name="Brottier P."/>
            <person name="Cure S."/>
            <person name="Segurens B."/>
            <person name="Aniere F."/>
            <person name="Samain S."/>
            <person name="Crespeau H."/>
            <person name="Abbasi N."/>
            <person name="Aiach N."/>
            <person name="Boscus D."/>
            <person name="Dickhoff R."/>
            <person name="Dors M."/>
            <person name="Dubois I."/>
            <person name="Friedman C."/>
            <person name="Gouyvenoux M."/>
            <person name="James R."/>
            <person name="Madan A."/>
            <person name="Mairey-Estrada B."/>
            <person name="Mangenot S."/>
            <person name="Martins N."/>
            <person name="Menard M."/>
            <person name="Oztas S."/>
            <person name="Ratcliffe A."/>
            <person name="Shaffer T."/>
            <person name="Trask B."/>
            <person name="Vacherie B."/>
            <person name="Bellemere C."/>
            <person name="Belser C."/>
            <person name="Besnard-Gonnet M."/>
            <person name="Bartol-Mavel D."/>
            <person name="Boutard M."/>
            <person name="Briez-Silla S."/>
            <person name="Combette S."/>
            <person name="Dufosse-Laurent V."/>
            <person name="Ferron C."/>
            <person name="Lechaplais C."/>
            <person name="Louesse C."/>
            <person name="Muselet D."/>
            <person name="Magdelenat G."/>
            <person name="Pateau E."/>
            <person name="Petit E."/>
            <person name="Sirvain-Trukniewicz P."/>
            <person name="Trybou A."/>
            <person name="Vega-Czarny N."/>
            <person name="Bataille E."/>
            <person name="Bluet E."/>
            <person name="Bordelais I."/>
            <person name="Dubois M."/>
            <person name="Dumont C."/>
            <person name="Guerin T."/>
            <person name="Haffray S."/>
            <person name="Hammadi R."/>
            <person name="Muanga J."/>
            <person name="Pellouin V."/>
            <person name="Robert D."/>
            <person name="Wunderle E."/>
            <person name="Gauguet G."/>
            <person name="Roy A."/>
            <person name="Sainte-Marthe L."/>
            <person name="Verdier J."/>
            <person name="Verdier-Discala C."/>
            <person name="Hillier L.W."/>
            <person name="Fulton L."/>
            <person name="McPherson J."/>
            <person name="Matsuda F."/>
            <person name="Wilson R."/>
            <person name="Scarpelli C."/>
            <person name="Gyapay G."/>
            <person name="Wincker P."/>
            <person name="Saurin W."/>
            <person name="Quetier F."/>
            <person name="Waterston R."/>
            <person name="Hood L."/>
            <person name="Weissenbach J."/>
        </authorList>
    </citation>
    <scope>NUCLEOTIDE SEQUENCE [LARGE SCALE GENOMIC DNA] (IMGT ALLELE TRAJ42*01)</scope>
</reference>
<reference key="2">
    <citation type="book" date="2001" name="The T Cell Receptor FactsBook.">
        <title>The T Cell Receptor FactsBook.</title>
        <editorList>
            <person name="Lefranc M.P."/>
            <person name="Lefranc G."/>
        </editorList>
        <authorList>
            <person name="Lefranc M.P."/>
            <person name="Lefranc G."/>
        </authorList>
    </citation>
    <scope>NOMENCLATURE</scope>
</reference>
<reference key="3">
    <citation type="journal article" date="2004" name="Nat. Rev. Immunol.">
        <title>The many important facets of T-cell repertoire diversity.</title>
        <authorList>
            <person name="Nikolich-Zugich J."/>
            <person name="Slifka M.K."/>
            <person name="Messaoudi I."/>
        </authorList>
    </citation>
    <scope>REVIEW ON T CELL REPERTOIRE DIVERSITY</scope>
</reference>
<reference key="4">
    <citation type="journal article" date="2010" name="Cold Spring Harb. Perspect. Biol.">
        <title>Structural biology of the T-cell receptor: insights into receptor assembly, ligand recognition, and initiation of signaling.</title>
        <authorList>
            <person name="Wucherpfennig K.W."/>
            <person name="Gagnon E."/>
            <person name="Call M.J."/>
            <person name="Huseby E.S."/>
            <person name="Call M.E."/>
        </authorList>
    </citation>
    <scope>REVIEW ON T CELL RECEPTOR-CD3 COMPLEX ASSEMBLY</scope>
    <scope>SUBCELLULAR LOCATION</scope>
</reference>
<reference key="5">
    <citation type="journal article" date="2013" name="Nat. Rev. Immunol.">
        <title>T cell receptor signalling networks: branched, diversified and bounded.</title>
        <authorList>
            <person name="Brownlie R.J."/>
            <person name="Zamoyska R."/>
        </authorList>
    </citation>
    <scope>REVIEW ON T CELL RECEPTOR SIGNALING</scope>
</reference>
<reference key="6">
    <citation type="journal article" date="2014" name="Front. Immunol.">
        <title>Immunoglobulin and T Cell Receptor Genes: IMGT((R)) and the Birth and Rise of Immunoinformatics.</title>
        <authorList>
            <person name="Lefranc M.P."/>
        </authorList>
    </citation>
    <scope>NOMENCLATURE</scope>
</reference>
<reference key="7">
    <citation type="journal article" date="2015" name="Annu. Rev. Immunol.">
        <title>T cell antigen receptor recognition of antigen-presenting molecules.</title>
        <authorList>
            <person name="Rossjohn J."/>
            <person name="Gras S."/>
            <person name="Miles J.J."/>
            <person name="Turner S.J."/>
            <person name="Godfrey D.I."/>
            <person name="McCluskey J."/>
        </authorList>
    </citation>
    <scope>REVIEW ON FUNCTION</scope>
</reference>
<protein>
    <recommendedName>
        <fullName evidence="7">T cell receptor alpha joining 42</fullName>
    </recommendedName>
</protein>
<sequence length="20" mass="2051">YGGSQGNLIFGKGTKLSVKP</sequence>
<dbReference type="EMBL" id="AC243965">
    <property type="status" value="NOT_ANNOTATED_CDS"/>
    <property type="molecule type" value="Genomic_DNA"/>
</dbReference>
<dbReference type="IMGT_GENE-DB" id="TRAJ42"/>
<dbReference type="BioMuta" id="TRAJ42"/>
<dbReference type="MassIVE" id="A0A075B6Y9"/>
<dbReference type="Ensembl" id="ENST00000390495.1">
    <property type="protein sequence ID" value="ENSP00000451815.1"/>
    <property type="gene ID" value="ENSG00000211847.1"/>
</dbReference>
<dbReference type="UCSC" id="uc021rpz.2">
    <property type="organism name" value="human"/>
</dbReference>
<dbReference type="AGR" id="HGNC:12073"/>
<dbReference type="GeneCards" id="TRAJ42"/>
<dbReference type="HGNC" id="HGNC:12073">
    <property type="gene designation" value="TRAJ42"/>
</dbReference>
<dbReference type="HPA" id="ENSG00000211847">
    <property type="expression patterns" value="Group enriched (lymphoid tissue, retina)"/>
</dbReference>
<dbReference type="neXtProt" id="NX_A0A075B6Y9"/>
<dbReference type="VEuPathDB" id="HostDB:ENSG00000211847"/>
<dbReference type="HOGENOM" id="CLU_221942_3_0_1"/>
<dbReference type="InParanoid" id="A0A075B6Y9"/>
<dbReference type="PAN-GO" id="A0A075B6Y9">
    <property type="GO annotations" value="0 GO annotations based on evolutionary models"/>
</dbReference>
<dbReference type="ChiTaRS" id="TRAJ42">
    <property type="organism name" value="human"/>
</dbReference>
<dbReference type="PRO" id="PR:A0A075B6Y9"/>
<dbReference type="Proteomes" id="UP000005640">
    <property type="component" value="Chromosome 14"/>
</dbReference>
<dbReference type="Bgee" id="ENSG00000211847">
    <property type="expression patterns" value="Expressed in granulocyte and 64 other cell types or tissues"/>
</dbReference>
<dbReference type="GO" id="GO:0005886">
    <property type="term" value="C:plasma membrane"/>
    <property type="evidence" value="ECO:0007669"/>
    <property type="project" value="UniProtKB-SubCell"/>
</dbReference>
<dbReference type="GO" id="GO:0002250">
    <property type="term" value="P:adaptive immune response"/>
    <property type="evidence" value="ECO:0007669"/>
    <property type="project" value="UniProtKB-KW"/>
</dbReference>
<organism>
    <name type="scientific">Homo sapiens</name>
    <name type="common">Human</name>
    <dbReference type="NCBI Taxonomy" id="9606"/>
    <lineage>
        <taxon>Eukaryota</taxon>
        <taxon>Metazoa</taxon>
        <taxon>Chordata</taxon>
        <taxon>Craniata</taxon>
        <taxon>Vertebrata</taxon>
        <taxon>Euteleostomi</taxon>
        <taxon>Mammalia</taxon>
        <taxon>Eutheria</taxon>
        <taxon>Euarchontoglires</taxon>
        <taxon>Primates</taxon>
        <taxon>Haplorrhini</taxon>
        <taxon>Catarrhini</taxon>
        <taxon>Hominidae</taxon>
        <taxon>Homo</taxon>
    </lineage>
</organism>
<name>TJA42_HUMAN</name>
<keyword id="KW-1064">Adaptive immunity</keyword>
<keyword id="KW-1003">Cell membrane</keyword>
<keyword id="KW-0391">Immunity</keyword>
<keyword id="KW-0472">Membrane</keyword>
<keyword id="KW-0675">Receptor</keyword>
<keyword id="KW-1185">Reference proteome</keyword>
<evidence type="ECO:0000256" key="1">
    <source>
        <dbReference type="SAM" id="MobiDB-lite"/>
    </source>
</evidence>
<evidence type="ECO:0000303" key="2">
    <source>
    </source>
</evidence>
<evidence type="ECO:0000303" key="3">
    <source>
    </source>
</evidence>
<evidence type="ECO:0000303" key="4">
    <source>
    </source>
</evidence>
<evidence type="ECO:0000303" key="5">
    <source>
    </source>
</evidence>
<evidence type="ECO:0000303" key="6">
    <source>
    </source>
</evidence>
<evidence type="ECO:0000303" key="7">
    <source ref="2"/>
</evidence>
<evidence type="ECO:0000312" key="8">
    <source>
        <dbReference type="HGNC" id="HGNC:12073"/>
    </source>
</evidence>
<feature type="chain" id="PRO_0000447042" description="T cell receptor alpha joining 42">
    <location>
        <begin position="1" status="less than"/>
        <end position="20" status="greater than"/>
    </location>
</feature>
<feature type="region of interest" description="Disordered" evidence="1">
    <location>
        <begin position="1"/>
        <end position="20"/>
    </location>
</feature>
<feature type="non-terminal residue">
    <location>
        <position position="1"/>
    </location>
</feature>
<feature type="non-terminal residue">
    <location>
        <position position="20"/>
    </location>
</feature>
<proteinExistence type="predicted"/>